<protein>
    <recommendedName>
        <fullName>Mediator of RNA polymerase II transcription subunit 25</fullName>
    </recommendedName>
    <alternativeName>
        <fullName>Mediator complex subunit 25</fullName>
    </alternativeName>
</protein>
<evidence type="ECO:0000250" key="1"/>
<evidence type="ECO:0000256" key="2">
    <source>
        <dbReference type="SAM" id="MobiDB-lite"/>
    </source>
</evidence>
<evidence type="ECO:0000305" key="3"/>
<reference key="1">
    <citation type="submission" date="2004-06" db="EMBL/GenBank/DDBJ databases">
        <authorList>
            <consortium name="NIH - Xenopus Gene Collection (XGC) project"/>
        </authorList>
    </citation>
    <scope>NUCLEOTIDE SEQUENCE [LARGE SCALE MRNA]</scope>
    <source>
        <tissue>Spleen</tissue>
    </source>
</reference>
<name>MED25_XENLA</name>
<dbReference type="EMBL" id="BC073333">
    <property type="protein sequence ID" value="AAH73333.1"/>
    <property type="molecule type" value="mRNA"/>
</dbReference>
<dbReference type="RefSeq" id="NP_001085778.1">
    <property type="nucleotide sequence ID" value="NM_001092309.1"/>
</dbReference>
<dbReference type="RefSeq" id="XP_018082410.1">
    <property type="nucleotide sequence ID" value="XM_018226921.1"/>
</dbReference>
<dbReference type="SMR" id="Q6GP15"/>
<dbReference type="DNASU" id="444205"/>
<dbReference type="GeneID" id="444205"/>
<dbReference type="KEGG" id="xla:444205"/>
<dbReference type="AGR" id="Xenbase:XB-GENE-5831033"/>
<dbReference type="CTD" id="444205"/>
<dbReference type="Xenbase" id="XB-GENE-5831033">
    <property type="gene designation" value="med25.S"/>
</dbReference>
<dbReference type="OMA" id="WMRPFIA"/>
<dbReference type="OrthoDB" id="7690434at2759"/>
<dbReference type="Proteomes" id="UP000186698">
    <property type="component" value="Chromosome 7S"/>
</dbReference>
<dbReference type="Bgee" id="444205">
    <property type="expression patterns" value="Expressed in ovary and 19 other cell types or tissues"/>
</dbReference>
<dbReference type="GO" id="GO:0016592">
    <property type="term" value="C:mediator complex"/>
    <property type="evidence" value="ECO:0000318"/>
    <property type="project" value="GO_Central"/>
</dbReference>
<dbReference type="GO" id="GO:0005667">
    <property type="term" value="C:transcription regulator complex"/>
    <property type="evidence" value="ECO:0000318"/>
    <property type="project" value="GO_Central"/>
</dbReference>
<dbReference type="GO" id="GO:0045944">
    <property type="term" value="P:positive regulation of transcription by RNA polymerase II"/>
    <property type="evidence" value="ECO:0000318"/>
    <property type="project" value="GO_Central"/>
</dbReference>
<dbReference type="FunFam" id="2.40.290.30:FF:000001">
    <property type="entry name" value="Mediator of RNA polymerase II transcription subunit 25"/>
    <property type="match status" value="1"/>
</dbReference>
<dbReference type="Gene3D" id="2.40.290.30">
    <property type="entry name" value="Mediator complex subunit 25, ACID domain"/>
    <property type="match status" value="1"/>
</dbReference>
<dbReference type="InterPro" id="IPR021394">
    <property type="entry name" value="Med25_PTOV"/>
</dbReference>
<dbReference type="InterPro" id="IPR038196">
    <property type="entry name" value="Med25_PTOV_sf"/>
</dbReference>
<dbReference type="InterPro" id="IPR021397">
    <property type="entry name" value="Mediator_Med25_SD1"/>
</dbReference>
<dbReference type="InterPro" id="IPR021419">
    <property type="entry name" value="Mediator_Med25_VWA"/>
</dbReference>
<dbReference type="InterPro" id="IPR002035">
    <property type="entry name" value="VWF_A"/>
</dbReference>
<dbReference type="InterPro" id="IPR036465">
    <property type="entry name" value="vWFA_dom_sf"/>
</dbReference>
<dbReference type="PANTHER" id="PTHR12433">
    <property type="entry name" value="MEDIATOR OF RNA POLYMERASE II TRANSCRIPTION SUBUNIT 25"/>
    <property type="match status" value="1"/>
</dbReference>
<dbReference type="PANTHER" id="PTHR12433:SF11">
    <property type="entry name" value="MEDIATOR OF RNA POLYMERASE II TRANSCRIPTION SUBUNIT 25"/>
    <property type="match status" value="1"/>
</dbReference>
<dbReference type="Pfam" id="PF11232">
    <property type="entry name" value="Med25"/>
    <property type="match status" value="1"/>
</dbReference>
<dbReference type="Pfam" id="PF11235">
    <property type="entry name" value="Med25_SD1"/>
    <property type="match status" value="1"/>
</dbReference>
<dbReference type="Pfam" id="PF11265">
    <property type="entry name" value="Med25_VWA"/>
    <property type="match status" value="1"/>
</dbReference>
<dbReference type="SUPFAM" id="SSF53300">
    <property type="entry name" value="vWA-like"/>
    <property type="match status" value="1"/>
</dbReference>
<dbReference type="PROSITE" id="PS50234">
    <property type="entry name" value="VWFA"/>
    <property type="match status" value="1"/>
</dbReference>
<gene>
    <name type="primary">med25</name>
</gene>
<keyword id="KW-0010">Activator</keyword>
<keyword id="KW-0539">Nucleus</keyword>
<keyword id="KW-1185">Reference proteome</keyword>
<keyword id="KW-0804">Transcription</keyword>
<keyword id="KW-0805">Transcription regulation</keyword>
<comment type="function">
    <text evidence="1">Component of the Mediator complex, a coactivator involved in the regulated transcription of nearly all RNA polymerase II-dependent genes. Mediator functions as a bridge to convey information from gene-specific regulatory proteins to the basal RNA polymerase II transcription machinery. Mediator is recruited to promoters by direct interactions with regulatory proteins and serves as a scaffold for the assembly of a functional preinitiation complex with RNA polymerase II and the general transcription factors (By similarity).</text>
</comment>
<comment type="subunit">
    <text evidence="1">Component of the Mediator complex.</text>
</comment>
<comment type="subcellular location">
    <subcellularLocation>
        <location evidence="1">Nucleus</location>
    </subcellularLocation>
</comment>
<comment type="similarity">
    <text evidence="3">Belongs to the Mediator complex subunit 25 family.</text>
</comment>
<feature type="chain" id="PRO_0000304955" description="Mediator of RNA polymerase II transcription subunit 25">
    <location>
        <begin position="1"/>
        <end position="801"/>
    </location>
</feature>
<feature type="region of interest" description="Disordered" evidence="2">
    <location>
        <begin position="647"/>
        <end position="735"/>
    </location>
</feature>
<feature type="short sequence motif" description="LXXLL motif">
    <location>
        <begin position="689"/>
        <end position="693"/>
    </location>
</feature>
<feature type="compositionally biased region" description="Low complexity" evidence="2">
    <location>
        <begin position="647"/>
        <end position="676"/>
    </location>
</feature>
<feature type="compositionally biased region" description="Low complexity" evidence="2">
    <location>
        <begin position="687"/>
        <end position="710"/>
    </location>
</feature>
<feature type="compositionally biased region" description="Low complexity" evidence="2">
    <location>
        <begin position="722"/>
        <end position="735"/>
    </location>
</feature>
<proteinExistence type="evidence at transcript level"/>
<sequence length="801" mass="86512">MDAATPGNGIISDVVFVIEGTANLGPYFESLRKHYLLPAIEYFNGGPPAETDFGGDYGGTQYSLVVFNTVDCAPESYVQCHAPTSSAYEFVQWLDSIKFMGGGGESCSLIAEGLSTALQLFDDFKKMREQIGQTHKVCILICNSPPYLLPAVESTTYSGYTTENLVQKIGERGIHFSIISPRKLPALRTLFEKAMPVGLIEPQPKDYSQDPRHMILVRGMVLPVGGATSVPGVMPPKQHISQPPLPVVPPQIASAPSHQLPPVQPPYMQVPQQSTLTPAHAAAHSAVEAAKNQKNSPSNRFLLPNLNPMPNAPAVGTPFNQPPAPTLPPNASVPKMVPSPSSLMTPASQSSLITTVTTGPGPAPVQLQQQGAPQQPVPPSMPITGAVGGVQAPQPSQPQIGTVQLPCTQTPVNGNKLLAWSGVLEWQEKPRSVSVDNNAKLTRSLPCQVYINPGENLKTDQWPQKLIMQLIPQQLLTTLGPLFRNSRMVQFHFTNKDLESLKGLYRIMGSGFAGCVHFPHTTPCEVRVLMLLYSSKKKIFMGLIPNDQSGFVNGIRQVITNHKQVQMQKIDQQRNMGAVQGVGAGSVPANSQGFLQKQPGTLPVGQAVSQQMQGQQVAPGMPSISQVAMMDEQQRSQNLLHIRVQQPQQLASQAPPQATQSSVQAPGQPQNPQPGAMLRPQNPGANPQLRNLLLSQQPPQSSVPQTQQPLHHMQQAAQSMLPHQAMGQQMQHQAPGQLQLPGQSLMHQTPAQQWGNQMQQRAPIPGTLMMSAGPRGPVPQSGLQQVQAQSVMEDDILMDLI</sequence>
<accession>Q6GP15</accession>
<organism>
    <name type="scientific">Xenopus laevis</name>
    <name type="common">African clawed frog</name>
    <dbReference type="NCBI Taxonomy" id="8355"/>
    <lineage>
        <taxon>Eukaryota</taxon>
        <taxon>Metazoa</taxon>
        <taxon>Chordata</taxon>
        <taxon>Craniata</taxon>
        <taxon>Vertebrata</taxon>
        <taxon>Euteleostomi</taxon>
        <taxon>Amphibia</taxon>
        <taxon>Batrachia</taxon>
        <taxon>Anura</taxon>
        <taxon>Pipoidea</taxon>
        <taxon>Pipidae</taxon>
        <taxon>Xenopodinae</taxon>
        <taxon>Xenopus</taxon>
        <taxon>Xenopus</taxon>
    </lineage>
</organism>